<gene>
    <name type="primary">rpl1101</name>
    <name type="synonym">rpl11</name>
    <name type="synonym">rpl11a</name>
    <name type="ORF">SPAC26A3.07c</name>
</gene>
<reference key="1">
    <citation type="submission" date="1998-07" db="EMBL/GenBank/DDBJ databases">
        <title>S.pombe ribosomal protein L11 homolog.</title>
        <authorList>
            <person name="Kawamukai M."/>
        </authorList>
    </citation>
    <scope>NUCLEOTIDE SEQUENCE [MRNA]</scope>
</reference>
<reference key="2">
    <citation type="journal article" date="2002" name="Nature">
        <title>The genome sequence of Schizosaccharomyces pombe.</title>
        <authorList>
            <person name="Wood V."/>
            <person name="Gwilliam R."/>
            <person name="Rajandream M.A."/>
            <person name="Lyne M.H."/>
            <person name="Lyne R."/>
            <person name="Stewart A."/>
            <person name="Sgouros J.G."/>
            <person name="Peat N."/>
            <person name="Hayles J."/>
            <person name="Baker S.G."/>
            <person name="Basham D."/>
            <person name="Bowman S."/>
            <person name="Brooks K."/>
            <person name="Brown D."/>
            <person name="Brown S."/>
            <person name="Chillingworth T."/>
            <person name="Churcher C.M."/>
            <person name="Collins M."/>
            <person name="Connor R."/>
            <person name="Cronin A."/>
            <person name="Davis P."/>
            <person name="Feltwell T."/>
            <person name="Fraser A."/>
            <person name="Gentles S."/>
            <person name="Goble A."/>
            <person name="Hamlin N."/>
            <person name="Harris D.E."/>
            <person name="Hidalgo J."/>
            <person name="Hodgson G."/>
            <person name="Holroyd S."/>
            <person name="Hornsby T."/>
            <person name="Howarth S."/>
            <person name="Huckle E.J."/>
            <person name="Hunt S."/>
            <person name="Jagels K."/>
            <person name="James K.D."/>
            <person name="Jones L."/>
            <person name="Jones M."/>
            <person name="Leather S."/>
            <person name="McDonald S."/>
            <person name="McLean J."/>
            <person name="Mooney P."/>
            <person name="Moule S."/>
            <person name="Mungall K.L."/>
            <person name="Murphy L.D."/>
            <person name="Niblett D."/>
            <person name="Odell C."/>
            <person name="Oliver K."/>
            <person name="O'Neil S."/>
            <person name="Pearson D."/>
            <person name="Quail M.A."/>
            <person name="Rabbinowitsch E."/>
            <person name="Rutherford K.M."/>
            <person name="Rutter S."/>
            <person name="Saunders D."/>
            <person name="Seeger K."/>
            <person name="Sharp S."/>
            <person name="Skelton J."/>
            <person name="Simmonds M.N."/>
            <person name="Squares R."/>
            <person name="Squares S."/>
            <person name="Stevens K."/>
            <person name="Taylor K."/>
            <person name="Taylor R.G."/>
            <person name="Tivey A."/>
            <person name="Walsh S.V."/>
            <person name="Warren T."/>
            <person name="Whitehead S."/>
            <person name="Woodward J.R."/>
            <person name="Volckaert G."/>
            <person name="Aert R."/>
            <person name="Robben J."/>
            <person name="Grymonprez B."/>
            <person name="Weltjens I."/>
            <person name="Vanstreels E."/>
            <person name="Rieger M."/>
            <person name="Schaefer M."/>
            <person name="Mueller-Auer S."/>
            <person name="Gabel C."/>
            <person name="Fuchs M."/>
            <person name="Duesterhoeft A."/>
            <person name="Fritzc C."/>
            <person name="Holzer E."/>
            <person name="Moestl D."/>
            <person name="Hilbert H."/>
            <person name="Borzym K."/>
            <person name="Langer I."/>
            <person name="Beck A."/>
            <person name="Lehrach H."/>
            <person name="Reinhardt R."/>
            <person name="Pohl T.M."/>
            <person name="Eger P."/>
            <person name="Zimmermann W."/>
            <person name="Wedler H."/>
            <person name="Wambutt R."/>
            <person name="Purnelle B."/>
            <person name="Goffeau A."/>
            <person name="Cadieu E."/>
            <person name="Dreano S."/>
            <person name="Gloux S."/>
            <person name="Lelaure V."/>
            <person name="Mottier S."/>
            <person name="Galibert F."/>
            <person name="Aves S.J."/>
            <person name="Xiang Z."/>
            <person name="Hunt C."/>
            <person name="Moore K."/>
            <person name="Hurst S.M."/>
            <person name="Lucas M."/>
            <person name="Rochet M."/>
            <person name="Gaillardin C."/>
            <person name="Tallada V.A."/>
            <person name="Garzon A."/>
            <person name="Thode G."/>
            <person name="Daga R.R."/>
            <person name="Cruzado L."/>
            <person name="Jimenez J."/>
            <person name="Sanchez M."/>
            <person name="del Rey F."/>
            <person name="Benito J."/>
            <person name="Dominguez A."/>
            <person name="Revuelta J.L."/>
            <person name="Moreno S."/>
            <person name="Armstrong J."/>
            <person name="Forsburg S.L."/>
            <person name="Cerutti L."/>
            <person name="Lowe T."/>
            <person name="McCombie W.R."/>
            <person name="Paulsen I."/>
            <person name="Potashkin J."/>
            <person name="Shpakovski G.V."/>
            <person name="Ussery D."/>
            <person name="Barrell B.G."/>
            <person name="Nurse P."/>
        </authorList>
    </citation>
    <scope>NUCLEOTIDE SEQUENCE [LARGE SCALE GENOMIC DNA]</scope>
    <source>
        <strain>972 / ATCC 24843</strain>
    </source>
</reference>
<reference key="3">
    <citation type="journal article" date="2006" name="Nat. Biotechnol.">
        <title>ORFeome cloning and global analysis of protein localization in the fission yeast Schizosaccharomyces pombe.</title>
        <authorList>
            <person name="Matsuyama A."/>
            <person name="Arai R."/>
            <person name="Yashiroda Y."/>
            <person name="Shirai A."/>
            <person name="Kamata A."/>
            <person name="Sekido S."/>
            <person name="Kobayashi Y."/>
            <person name="Hashimoto A."/>
            <person name="Hamamoto M."/>
            <person name="Hiraoka Y."/>
            <person name="Horinouchi S."/>
            <person name="Yoshida M."/>
        </authorList>
    </citation>
    <scope>SUBCELLULAR LOCATION [LARGE SCALE ANALYSIS]</scope>
</reference>
<sequence length="174" mass="19891">MAEKAQNPMKELRISKLVLNISLGESGDRLTRAAKVLEQLSGQTPVFSKARYTIRRFGIRRNEKIACHVTVRGPKAEEILERGLKVKEYELKKRNFSATGNFGFGIQEHIDLGIKYDPSIGIYGMDFYVVMDRPGMRVARRKAQRGRVGYTHKINAEDTINWFKQKYDAVVLGK</sequence>
<keyword id="KW-0002">3D-structure</keyword>
<keyword id="KW-0963">Cytoplasm</keyword>
<keyword id="KW-0539">Nucleus</keyword>
<keyword id="KW-1185">Reference proteome</keyword>
<keyword id="KW-0687">Ribonucleoprotein</keyword>
<keyword id="KW-0689">Ribosomal protein</keyword>
<keyword id="KW-0694">RNA-binding</keyword>
<keyword id="KW-0699">rRNA-binding</keyword>
<protein>
    <recommendedName>
        <fullName evidence="3">Large ribosomal subunit protein uL5A</fullName>
    </recommendedName>
    <alternativeName>
        <fullName>60S ribosomal protein L11-A</fullName>
    </alternativeName>
</protein>
<evidence type="ECO:0000250" key="1">
    <source>
        <dbReference type="UniProtKB" id="P0C0W9"/>
    </source>
</evidence>
<evidence type="ECO:0000269" key="2">
    <source>
    </source>
</evidence>
<evidence type="ECO:0000305" key="3"/>
<comment type="function">
    <text evidence="1">Component of the ribosome, a large ribonucleoprotein complex responsible for the synthesis of proteins in the cell. The small ribosomal subunit (SSU) binds messenger RNAs (mRNAs) and translates the encoded message by selecting cognate aminoacyl-transfer RNA (tRNA) molecules. The large subunit (LSU) contains the ribosomal catalytic site termed the peptidyl transferase center (PTC), which catalyzes the formation of peptide bonds, thereby polymerizing the amino acids delivered by tRNAs into a polypeptide chain. The nascent polypeptides leave the ribosome through a tunnel in the LSU and interact with protein factors that function in enzymatic processing, targeting, and the membrane insertion of nascent chains at the exit of the ribosomal tunnel.</text>
</comment>
<comment type="subunit">
    <text evidence="1">Component of the large ribosomal subunit (LSU). Mature yeast ribosomes consist of a small (40S) and a large (60S) subunit. The 40S small subunit contains 1 molecule of ribosomal RNA (18S rRNA) and 33 different proteins (encoded by 57 genes). The large 60S subunit contains 3 rRNA molecules (25S, 5.8S and 5S rRNA) and 46 different proteins (encoded by 81 genes) (By similarity). Component of a hexameric 5S RNP precursor complex; this complex acts as a precursor for ribosome assembly (By similarity). rpl11a/rpl11b/uL5 forms a heterotrimeric complex with rpl5a/rpl5b/uL18 and syo1. Interaction of this complex with KAP104 allows the nuclear import of the heterotrimer (By similarity).</text>
</comment>
<comment type="subcellular location">
    <subcellularLocation>
        <location evidence="2">Cytoplasm</location>
    </subcellularLocation>
    <subcellularLocation>
        <location evidence="1">Nucleus</location>
    </subcellularLocation>
</comment>
<comment type="miscellaneous">
    <text>There are 2 genes for uL5 in S.pombe.</text>
</comment>
<comment type="similarity">
    <text evidence="3">Belongs to the universal ribosomal protein uL5 family.</text>
</comment>
<proteinExistence type="evidence at protein level"/>
<feature type="chain" id="PRO_0000125103" description="Large ribosomal subunit protein uL5A">
    <location>
        <begin position="1"/>
        <end position="174"/>
    </location>
</feature>
<dbReference type="EMBL" id="AB016005">
    <property type="protein sequence ID" value="BAA31552.1"/>
    <property type="molecule type" value="mRNA"/>
</dbReference>
<dbReference type="EMBL" id="CU329670">
    <property type="protein sequence ID" value="CAA93230.1"/>
    <property type="molecule type" value="Genomic_DNA"/>
</dbReference>
<dbReference type="PIR" id="T38395">
    <property type="entry name" value="T38395"/>
</dbReference>
<dbReference type="RefSeq" id="NP_594150.1">
    <property type="nucleotide sequence ID" value="NM_001019574.2"/>
</dbReference>
<dbReference type="PDB" id="8EUG">
    <property type="method" value="EM"/>
    <property type="resolution" value="2.80 A"/>
    <property type="chains" value="J=1-174"/>
</dbReference>
<dbReference type="PDB" id="8EUI">
    <property type="method" value="EM"/>
    <property type="resolution" value="3.10 A"/>
    <property type="chains" value="J=1-174"/>
</dbReference>
<dbReference type="PDB" id="9AXT">
    <property type="method" value="EM"/>
    <property type="resolution" value="2.40 A"/>
    <property type="chains" value="BW=1-174"/>
</dbReference>
<dbReference type="PDB" id="9AXU">
    <property type="method" value="EM"/>
    <property type="resolution" value="1.94 A"/>
    <property type="chains" value="W=1-174"/>
</dbReference>
<dbReference type="PDB" id="9AXV">
    <property type="method" value="EM"/>
    <property type="resolution" value="2.40 A"/>
    <property type="chains" value="BW=1-174"/>
</dbReference>
<dbReference type="PDBsum" id="8EUG"/>
<dbReference type="PDBsum" id="8EUI"/>
<dbReference type="PDBsum" id="9AXT"/>
<dbReference type="PDBsum" id="9AXU"/>
<dbReference type="PDBsum" id="9AXV"/>
<dbReference type="EMDB" id="EMD-43972"/>
<dbReference type="EMDB" id="EMD-43973"/>
<dbReference type="EMDB" id="EMD-43976"/>
<dbReference type="SMR" id="P0CT77"/>
<dbReference type="FunCoup" id="P0CT77">
    <property type="interactions" value="392"/>
</dbReference>
<dbReference type="STRING" id="284812.P0CT77"/>
<dbReference type="iPTMnet" id="P0CT77"/>
<dbReference type="PaxDb" id="4896-SPAC26A3.07c.1"/>
<dbReference type="EnsemblFungi" id="SPAC26A3.07c.1">
    <property type="protein sequence ID" value="SPAC26A3.07c.1:pep"/>
    <property type="gene ID" value="SPAC26A3.07c"/>
</dbReference>
<dbReference type="EnsemblFungi" id="SPBC17G9.10.1">
    <property type="protein sequence ID" value="SPBC17G9.10.1:pep"/>
    <property type="gene ID" value="SPBC17G9.10"/>
</dbReference>
<dbReference type="GeneID" id="2541591"/>
<dbReference type="KEGG" id="spo:2539846"/>
<dbReference type="KEGG" id="spo:2541591"/>
<dbReference type="PomBase" id="SPAC26A3.07c">
    <property type="gene designation" value="rpl1101"/>
</dbReference>
<dbReference type="VEuPathDB" id="FungiDB:SPAC26A3.07c"/>
<dbReference type="VEuPathDB" id="FungiDB:SPBC17G9.10"/>
<dbReference type="eggNOG" id="KOG0397">
    <property type="taxonomic scope" value="Eukaryota"/>
</dbReference>
<dbReference type="InParanoid" id="P0CT77"/>
<dbReference type="OMA" id="MDFYCIM"/>
<dbReference type="PhylomeDB" id="P0CT77"/>
<dbReference type="Reactome" id="R-SPO-156827">
    <property type="pathway name" value="L13a-mediated translational silencing of Ceruloplasmin expression"/>
</dbReference>
<dbReference type="Reactome" id="R-SPO-1799339">
    <property type="pathway name" value="SRP-dependent cotranslational protein targeting to membrane"/>
</dbReference>
<dbReference type="Reactome" id="R-SPO-72689">
    <property type="pathway name" value="Formation of a pool of free 40S subunits"/>
</dbReference>
<dbReference type="Reactome" id="R-SPO-72706">
    <property type="pathway name" value="GTP hydrolysis and joining of the 60S ribosomal subunit"/>
</dbReference>
<dbReference type="Reactome" id="R-SPO-975956">
    <property type="pathway name" value="Nonsense Mediated Decay (NMD) independent of the Exon Junction Complex (EJC)"/>
</dbReference>
<dbReference type="Reactome" id="R-SPO-975957">
    <property type="pathway name" value="Nonsense Mediated Decay (NMD) enhanced by the Exon Junction Complex (EJC)"/>
</dbReference>
<dbReference type="PRO" id="PR:P0CT77"/>
<dbReference type="Proteomes" id="UP000002485">
    <property type="component" value="Chromosome I"/>
</dbReference>
<dbReference type="GO" id="GO:0005829">
    <property type="term" value="C:cytosol"/>
    <property type="evidence" value="ECO:0007005"/>
    <property type="project" value="PomBase"/>
</dbReference>
<dbReference type="GO" id="GO:0022625">
    <property type="term" value="C:cytosolic large ribosomal subunit"/>
    <property type="evidence" value="ECO:0000269"/>
    <property type="project" value="PomBase"/>
</dbReference>
<dbReference type="GO" id="GO:0022627">
    <property type="term" value="C:cytosolic small ribosomal subunit"/>
    <property type="evidence" value="ECO:0000266"/>
    <property type="project" value="PomBase"/>
</dbReference>
<dbReference type="GO" id="GO:0005634">
    <property type="term" value="C:nucleus"/>
    <property type="evidence" value="ECO:0007669"/>
    <property type="project" value="UniProtKB-SubCell"/>
</dbReference>
<dbReference type="GO" id="GO:0003723">
    <property type="term" value="F:RNA binding"/>
    <property type="evidence" value="ECO:0000318"/>
    <property type="project" value="GO_Central"/>
</dbReference>
<dbReference type="GO" id="GO:0019843">
    <property type="term" value="F:rRNA binding"/>
    <property type="evidence" value="ECO:0007669"/>
    <property type="project" value="UniProtKB-KW"/>
</dbReference>
<dbReference type="GO" id="GO:0003735">
    <property type="term" value="F:structural constituent of ribosome"/>
    <property type="evidence" value="ECO:0000266"/>
    <property type="project" value="PomBase"/>
</dbReference>
<dbReference type="GO" id="GO:0002181">
    <property type="term" value="P:cytoplasmic translation"/>
    <property type="evidence" value="ECO:0000266"/>
    <property type="project" value="PomBase"/>
</dbReference>
<dbReference type="GO" id="GO:0042254">
    <property type="term" value="P:ribosome biogenesis"/>
    <property type="evidence" value="ECO:0000266"/>
    <property type="project" value="PomBase"/>
</dbReference>
<dbReference type="GO" id="GO:0006412">
    <property type="term" value="P:translation"/>
    <property type="evidence" value="ECO:0000318"/>
    <property type="project" value="GO_Central"/>
</dbReference>
<dbReference type="FunFam" id="3.30.1440.10:FF:000002">
    <property type="entry name" value="60S ribosomal protein L11"/>
    <property type="match status" value="1"/>
</dbReference>
<dbReference type="Gene3D" id="3.30.1440.10">
    <property type="match status" value="1"/>
</dbReference>
<dbReference type="InterPro" id="IPR002132">
    <property type="entry name" value="Ribosomal_uL5"/>
</dbReference>
<dbReference type="InterPro" id="IPR031309">
    <property type="entry name" value="Ribosomal_uL5_C"/>
</dbReference>
<dbReference type="InterPro" id="IPR020929">
    <property type="entry name" value="Ribosomal_uL5_CS"/>
</dbReference>
<dbReference type="InterPro" id="IPR022803">
    <property type="entry name" value="Ribosomal_uL5_dom_sf"/>
</dbReference>
<dbReference type="InterPro" id="IPR031310">
    <property type="entry name" value="Ribosomal_uL5_N"/>
</dbReference>
<dbReference type="NCBIfam" id="NF003258">
    <property type="entry name" value="PRK04219.1"/>
    <property type="match status" value="1"/>
</dbReference>
<dbReference type="PANTHER" id="PTHR11994">
    <property type="entry name" value="60S RIBOSOMAL PROTEIN L11-RELATED"/>
    <property type="match status" value="1"/>
</dbReference>
<dbReference type="Pfam" id="PF00281">
    <property type="entry name" value="Ribosomal_L5"/>
    <property type="match status" value="1"/>
</dbReference>
<dbReference type="Pfam" id="PF00673">
    <property type="entry name" value="Ribosomal_L5_C"/>
    <property type="match status" value="1"/>
</dbReference>
<dbReference type="PIRSF" id="PIRSF002161">
    <property type="entry name" value="Ribosomal_L5"/>
    <property type="match status" value="1"/>
</dbReference>
<dbReference type="SUPFAM" id="SSF55282">
    <property type="entry name" value="RL5-like"/>
    <property type="match status" value="1"/>
</dbReference>
<dbReference type="PROSITE" id="PS00358">
    <property type="entry name" value="RIBOSOMAL_L5"/>
    <property type="match status" value="1"/>
</dbReference>
<organism>
    <name type="scientific">Schizosaccharomyces pombe (strain 972 / ATCC 24843)</name>
    <name type="common">Fission yeast</name>
    <dbReference type="NCBI Taxonomy" id="284812"/>
    <lineage>
        <taxon>Eukaryota</taxon>
        <taxon>Fungi</taxon>
        <taxon>Dikarya</taxon>
        <taxon>Ascomycota</taxon>
        <taxon>Taphrinomycotina</taxon>
        <taxon>Schizosaccharomycetes</taxon>
        <taxon>Schizosaccharomycetales</taxon>
        <taxon>Schizosaccharomycetaceae</taxon>
        <taxon>Schizosaccharomyces</taxon>
    </lineage>
</organism>
<name>RL11A_SCHPO</name>
<accession>P0CT77</accession>
<accession>Q10157</accession>
<accession>Q9UTS3</accession>